<reference key="1">
    <citation type="journal article" date="2011" name="J. Bacteriol.">
        <title>Genome sequences of eight morphologically diverse alphaproteobacteria.</title>
        <authorList>
            <consortium name="US DOE Joint Genome Institute"/>
            <person name="Brown P.J."/>
            <person name="Kysela D.T."/>
            <person name="Buechlein A."/>
            <person name="Hemmerich C."/>
            <person name="Brun Y.V."/>
        </authorList>
    </citation>
    <scope>NUCLEOTIDE SEQUENCE [LARGE SCALE GENOMIC DNA]</scope>
    <source>
        <strain>ATCC 21756 / DSM 7131 / JCM 7823 / NBRC 15250 / LMG 17158 / TK0059</strain>
    </source>
</reference>
<accession>D5VGV3</accession>
<proteinExistence type="inferred from homology"/>
<protein>
    <recommendedName>
        <fullName evidence="1">Putative carbamate hydrolase RutD</fullName>
        <ecNumber evidence="1">3.5.1.-</ecNumber>
    </recommendedName>
    <alternativeName>
        <fullName evidence="1">Aminohydrolase</fullName>
    </alternativeName>
</protein>
<dbReference type="EC" id="3.5.1.-" evidence="1"/>
<dbReference type="EMBL" id="CP002008">
    <property type="protein sequence ID" value="ADG10546.1"/>
    <property type="molecule type" value="Genomic_DNA"/>
</dbReference>
<dbReference type="RefSeq" id="WP_013079201.1">
    <property type="nucleotide sequence ID" value="NC_014100.1"/>
</dbReference>
<dbReference type="SMR" id="D5VGV3"/>
<dbReference type="STRING" id="509190.Cseg_2080"/>
<dbReference type="ESTHER" id="caust-rutd">
    <property type="family name" value="RutD"/>
</dbReference>
<dbReference type="KEGG" id="cse:Cseg_2080"/>
<dbReference type="eggNOG" id="COG2021">
    <property type="taxonomic scope" value="Bacteria"/>
</dbReference>
<dbReference type="HOGENOM" id="CLU_020336_50_1_5"/>
<dbReference type="Proteomes" id="UP000002629">
    <property type="component" value="Chromosome"/>
</dbReference>
<dbReference type="GO" id="GO:0016811">
    <property type="term" value="F:hydrolase activity, acting on carbon-nitrogen (but not peptide) bonds, in linear amides"/>
    <property type="evidence" value="ECO:0007669"/>
    <property type="project" value="InterPro"/>
</dbReference>
<dbReference type="GO" id="GO:0019740">
    <property type="term" value="P:nitrogen utilization"/>
    <property type="evidence" value="ECO:0007669"/>
    <property type="project" value="UniProtKB-UniRule"/>
</dbReference>
<dbReference type="GO" id="GO:0006212">
    <property type="term" value="P:uracil catabolic process"/>
    <property type="evidence" value="ECO:0007669"/>
    <property type="project" value="UniProtKB-UniRule"/>
</dbReference>
<dbReference type="Gene3D" id="3.40.50.1820">
    <property type="entry name" value="alpha/beta hydrolase"/>
    <property type="match status" value="1"/>
</dbReference>
<dbReference type="HAMAP" id="MF_00832">
    <property type="entry name" value="RutD"/>
    <property type="match status" value="1"/>
</dbReference>
<dbReference type="InterPro" id="IPR050471">
    <property type="entry name" value="AB_hydrolase"/>
</dbReference>
<dbReference type="InterPro" id="IPR000073">
    <property type="entry name" value="AB_hydrolase_1"/>
</dbReference>
<dbReference type="InterPro" id="IPR029058">
    <property type="entry name" value="AB_hydrolase_fold"/>
</dbReference>
<dbReference type="InterPro" id="IPR019913">
    <property type="entry name" value="Pyrimidine_utilisation_RutD"/>
</dbReference>
<dbReference type="NCBIfam" id="TIGR03611">
    <property type="entry name" value="RutD"/>
    <property type="match status" value="1"/>
</dbReference>
<dbReference type="PANTHER" id="PTHR43433:SF5">
    <property type="entry name" value="AB HYDROLASE-1 DOMAIN-CONTAINING PROTEIN"/>
    <property type="match status" value="1"/>
</dbReference>
<dbReference type="PANTHER" id="PTHR43433">
    <property type="entry name" value="HYDROLASE, ALPHA/BETA FOLD FAMILY PROTEIN"/>
    <property type="match status" value="1"/>
</dbReference>
<dbReference type="Pfam" id="PF00561">
    <property type="entry name" value="Abhydrolase_1"/>
    <property type="match status" value="1"/>
</dbReference>
<dbReference type="PRINTS" id="PR00111">
    <property type="entry name" value="ABHYDROLASE"/>
</dbReference>
<dbReference type="SUPFAM" id="SSF53474">
    <property type="entry name" value="alpha/beta-Hydrolases"/>
    <property type="match status" value="1"/>
</dbReference>
<keyword id="KW-0378">Hydrolase</keyword>
<gene>
    <name evidence="1" type="primary">rutD</name>
    <name type="ordered locus">Cseg_2080</name>
</gene>
<sequence>MTTGTVDGICYEVHGWPVAGREVVLLSSGLGGSAAFWAPQMKALTERWPVVTYDHRGTGRSVRALPPGPYSVDDMAQDMVKVMDALGLTKAHVVGHAAGGNAGLALALNHPDRLGKLVVVNGWSRPDPHIQRCFDTRIHLLNDTGIKAYVHAQPIFLYPADWISRNHARLMAEEAHHVAGFPPREVMLARINALLAFDIDARLEEIPHRVLVSASADDMLVPMSCSQRLAARLPNADFQQVAWGGHGFTVTDPETFNEGLIKFLEGA</sequence>
<name>RUTD_CAUST</name>
<feature type="chain" id="PRO_0000402930" description="Putative carbamate hydrolase RutD">
    <location>
        <begin position="1"/>
        <end position="267"/>
    </location>
</feature>
<feature type="domain" description="AB hydrolase-1" evidence="1">
    <location>
        <begin position="23"/>
        <end position="139"/>
    </location>
</feature>
<evidence type="ECO:0000255" key="1">
    <source>
        <dbReference type="HAMAP-Rule" id="MF_00832"/>
    </source>
</evidence>
<comment type="function">
    <text evidence="1">Involved in pyrimidine catabolism. May facilitate the hydrolysis of carbamate, a reaction that can also occur spontaneously.</text>
</comment>
<comment type="catalytic activity">
    <reaction evidence="1">
        <text>carbamate + 2 H(+) = NH4(+) + CO2</text>
        <dbReference type="Rhea" id="RHEA:15649"/>
        <dbReference type="ChEBI" id="CHEBI:13941"/>
        <dbReference type="ChEBI" id="CHEBI:15378"/>
        <dbReference type="ChEBI" id="CHEBI:16526"/>
        <dbReference type="ChEBI" id="CHEBI:28938"/>
    </reaction>
</comment>
<comment type="similarity">
    <text evidence="1">Belongs to the AB hydrolase superfamily. Hydrolase RutD family.</text>
</comment>
<organism>
    <name type="scientific">Caulobacter segnis (strain ATCC 21756 / DSM 7131 / JCM 7823 / NBRC 15250 / LMG 17158 / TK0059)</name>
    <name type="common">Mycoplana segnis</name>
    <dbReference type="NCBI Taxonomy" id="509190"/>
    <lineage>
        <taxon>Bacteria</taxon>
        <taxon>Pseudomonadati</taxon>
        <taxon>Pseudomonadota</taxon>
        <taxon>Alphaproteobacteria</taxon>
        <taxon>Caulobacterales</taxon>
        <taxon>Caulobacteraceae</taxon>
        <taxon>Caulobacter</taxon>
    </lineage>
</organism>